<gene>
    <name evidence="1" type="primary">sucC</name>
    <name type="ordered locus">Sfum_1703</name>
</gene>
<protein>
    <recommendedName>
        <fullName evidence="1">Succinate--CoA ligase [ADP-forming] subunit beta</fullName>
        <ecNumber evidence="1">6.2.1.5</ecNumber>
    </recommendedName>
    <alternativeName>
        <fullName evidence="1">Succinyl-CoA synthetase subunit beta</fullName>
        <shortName evidence="1">SCS-beta</shortName>
    </alternativeName>
</protein>
<keyword id="KW-0067">ATP-binding</keyword>
<keyword id="KW-0436">Ligase</keyword>
<keyword id="KW-0460">Magnesium</keyword>
<keyword id="KW-0479">Metal-binding</keyword>
<keyword id="KW-0547">Nucleotide-binding</keyword>
<keyword id="KW-1185">Reference proteome</keyword>
<keyword id="KW-0816">Tricarboxylic acid cycle</keyword>
<comment type="function">
    <text evidence="1">Succinyl-CoA synthetase functions in the citric acid cycle (TCA), coupling the hydrolysis of succinyl-CoA to the synthesis of either ATP or GTP and thus represents the only step of substrate-level phosphorylation in the TCA. The beta subunit provides nucleotide specificity of the enzyme and binds the substrate succinate, while the binding sites for coenzyme A and phosphate are found in the alpha subunit.</text>
</comment>
<comment type="catalytic activity">
    <reaction evidence="1">
        <text>succinate + ATP + CoA = succinyl-CoA + ADP + phosphate</text>
        <dbReference type="Rhea" id="RHEA:17661"/>
        <dbReference type="ChEBI" id="CHEBI:30031"/>
        <dbReference type="ChEBI" id="CHEBI:30616"/>
        <dbReference type="ChEBI" id="CHEBI:43474"/>
        <dbReference type="ChEBI" id="CHEBI:57287"/>
        <dbReference type="ChEBI" id="CHEBI:57292"/>
        <dbReference type="ChEBI" id="CHEBI:456216"/>
        <dbReference type="EC" id="6.2.1.5"/>
    </reaction>
    <physiologicalReaction direction="right-to-left" evidence="1">
        <dbReference type="Rhea" id="RHEA:17663"/>
    </physiologicalReaction>
</comment>
<comment type="catalytic activity">
    <reaction evidence="1">
        <text>GTP + succinate + CoA = succinyl-CoA + GDP + phosphate</text>
        <dbReference type="Rhea" id="RHEA:22120"/>
        <dbReference type="ChEBI" id="CHEBI:30031"/>
        <dbReference type="ChEBI" id="CHEBI:37565"/>
        <dbReference type="ChEBI" id="CHEBI:43474"/>
        <dbReference type="ChEBI" id="CHEBI:57287"/>
        <dbReference type="ChEBI" id="CHEBI:57292"/>
        <dbReference type="ChEBI" id="CHEBI:58189"/>
    </reaction>
    <physiologicalReaction direction="right-to-left" evidence="1">
        <dbReference type="Rhea" id="RHEA:22122"/>
    </physiologicalReaction>
</comment>
<comment type="cofactor">
    <cofactor evidence="1">
        <name>Mg(2+)</name>
        <dbReference type="ChEBI" id="CHEBI:18420"/>
    </cofactor>
    <text evidence="1">Binds 1 Mg(2+) ion per subunit.</text>
</comment>
<comment type="pathway">
    <text evidence="1">Carbohydrate metabolism; tricarboxylic acid cycle; succinate from succinyl-CoA (ligase route): step 1/1.</text>
</comment>
<comment type="subunit">
    <text evidence="1">Heterotetramer of two alpha and two beta subunits.</text>
</comment>
<comment type="similarity">
    <text evidence="1">Belongs to the succinate/malate CoA ligase beta subunit family.</text>
</comment>
<sequence>MKIHEYQAKQLFQKYGVPIPRGKAAFTVEEAKAVGAELGTFPVVVKAQIHAGGRGKGGGVKLAKSAAEVDQYAKGILGMTLVTHQTGPEGRLVKKLLVEEGLPIEKELYLSVLPDRGTSKIVFMASEAGGMDIEEVAAKTPEKIIKVFIDPLLGFKGFHANELAYGLNLKPELIKQFNAMVAALYKLCTDYDCSLVEINPLVLTSDNRVIALDGKINFDDNAMYRHKDIQEYRDLDEEDPFEIEASKFELNYIKMPGGNIGNMVNGAGLAMATMDIIQQAGAAPANFLDVGGGASAEQVENGFRIILADPAVKGVLINIFGGILRCDRLANGVVEAAKKVGIRVPVVIRMEGTNVEQGREILAKSGLNLINAKDVADAAQKIAAVAKG</sequence>
<proteinExistence type="inferred from homology"/>
<accession>A0LIY8</accession>
<dbReference type="EC" id="6.2.1.5" evidence="1"/>
<dbReference type="EMBL" id="CP000478">
    <property type="protein sequence ID" value="ABK17390.1"/>
    <property type="molecule type" value="Genomic_DNA"/>
</dbReference>
<dbReference type="RefSeq" id="WP_011698560.1">
    <property type="nucleotide sequence ID" value="NC_008554.1"/>
</dbReference>
<dbReference type="SMR" id="A0LIY8"/>
<dbReference type="FunCoup" id="A0LIY8">
    <property type="interactions" value="556"/>
</dbReference>
<dbReference type="STRING" id="335543.Sfum_1703"/>
<dbReference type="KEGG" id="sfu:Sfum_1703"/>
<dbReference type="eggNOG" id="COG0045">
    <property type="taxonomic scope" value="Bacteria"/>
</dbReference>
<dbReference type="HOGENOM" id="CLU_037430_0_2_7"/>
<dbReference type="InParanoid" id="A0LIY8"/>
<dbReference type="OrthoDB" id="9802602at2"/>
<dbReference type="UniPathway" id="UPA00223">
    <property type="reaction ID" value="UER00999"/>
</dbReference>
<dbReference type="Proteomes" id="UP000001784">
    <property type="component" value="Chromosome"/>
</dbReference>
<dbReference type="GO" id="GO:0005829">
    <property type="term" value="C:cytosol"/>
    <property type="evidence" value="ECO:0007669"/>
    <property type="project" value="TreeGrafter"/>
</dbReference>
<dbReference type="GO" id="GO:0042709">
    <property type="term" value="C:succinate-CoA ligase complex"/>
    <property type="evidence" value="ECO:0007669"/>
    <property type="project" value="TreeGrafter"/>
</dbReference>
<dbReference type="GO" id="GO:0005524">
    <property type="term" value="F:ATP binding"/>
    <property type="evidence" value="ECO:0007669"/>
    <property type="project" value="UniProtKB-UniRule"/>
</dbReference>
<dbReference type="GO" id="GO:0000287">
    <property type="term" value="F:magnesium ion binding"/>
    <property type="evidence" value="ECO:0007669"/>
    <property type="project" value="UniProtKB-UniRule"/>
</dbReference>
<dbReference type="GO" id="GO:0004775">
    <property type="term" value="F:succinate-CoA ligase (ADP-forming) activity"/>
    <property type="evidence" value="ECO:0007669"/>
    <property type="project" value="UniProtKB-UniRule"/>
</dbReference>
<dbReference type="GO" id="GO:0004776">
    <property type="term" value="F:succinate-CoA ligase (GDP-forming) activity"/>
    <property type="evidence" value="ECO:0007669"/>
    <property type="project" value="RHEA"/>
</dbReference>
<dbReference type="GO" id="GO:0006104">
    <property type="term" value="P:succinyl-CoA metabolic process"/>
    <property type="evidence" value="ECO:0007669"/>
    <property type="project" value="TreeGrafter"/>
</dbReference>
<dbReference type="GO" id="GO:0006099">
    <property type="term" value="P:tricarboxylic acid cycle"/>
    <property type="evidence" value="ECO:0007669"/>
    <property type="project" value="UniProtKB-UniRule"/>
</dbReference>
<dbReference type="FunFam" id="3.30.1490.20:FF:000002">
    <property type="entry name" value="Succinate--CoA ligase [ADP-forming] subunit beta"/>
    <property type="match status" value="1"/>
</dbReference>
<dbReference type="FunFam" id="3.30.470.20:FF:000002">
    <property type="entry name" value="Succinate--CoA ligase [ADP-forming] subunit beta"/>
    <property type="match status" value="1"/>
</dbReference>
<dbReference type="FunFam" id="3.40.50.261:FF:000001">
    <property type="entry name" value="Succinate--CoA ligase [ADP-forming] subunit beta"/>
    <property type="match status" value="1"/>
</dbReference>
<dbReference type="Gene3D" id="3.30.1490.20">
    <property type="entry name" value="ATP-grasp fold, A domain"/>
    <property type="match status" value="1"/>
</dbReference>
<dbReference type="Gene3D" id="3.30.470.20">
    <property type="entry name" value="ATP-grasp fold, B domain"/>
    <property type="match status" value="1"/>
</dbReference>
<dbReference type="Gene3D" id="3.40.50.261">
    <property type="entry name" value="Succinyl-CoA synthetase domains"/>
    <property type="match status" value="1"/>
</dbReference>
<dbReference type="HAMAP" id="MF_00558">
    <property type="entry name" value="Succ_CoA_beta"/>
    <property type="match status" value="1"/>
</dbReference>
<dbReference type="InterPro" id="IPR011761">
    <property type="entry name" value="ATP-grasp"/>
</dbReference>
<dbReference type="InterPro" id="IPR013650">
    <property type="entry name" value="ATP-grasp_succ-CoA_synth-type"/>
</dbReference>
<dbReference type="InterPro" id="IPR013815">
    <property type="entry name" value="ATP_grasp_subdomain_1"/>
</dbReference>
<dbReference type="InterPro" id="IPR017866">
    <property type="entry name" value="Succ-CoA_synthase_bsu_CS"/>
</dbReference>
<dbReference type="InterPro" id="IPR005811">
    <property type="entry name" value="SUCC_ACL_C"/>
</dbReference>
<dbReference type="InterPro" id="IPR005809">
    <property type="entry name" value="Succ_CoA_ligase-like_bsu"/>
</dbReference>
<dbReference type="InterPro" id="IPR016102">
    <property type="entry name" value="Succinyl-CoA_synth-like"/>
</dbReference>
<dbReference type="NCBIfam" id="NF001913">
    <property type="entry name" value="PRK00696.1"/>
    <property type="match status" value="1"/>
</dbReference>
<dbReference type="NCBIfam" id="TIGR01016">
    <property type="entry name" value="sucCoAbeta"/>
    <property type="match status" value="1"/>
</dbReference>
<dbReference type="PANTHER" id="PTHR11815:SF10">
    <property type="entry name" value="SUCCINATE--COA LIGASE [GDP-FORMING] SUBUNIT BETA, MITOCHONDRIAL"/>
    <property type="match status" value="1"/>
</dbReference>
<dbReference type="PANTHER" id="PTHR11815">
    <property type="entry name" value="SUCCINYL-COA SYNTHETASE BETA CHAIN"/>
    <property type="match status" value="1"/>
</dbReference>
<dbReference type="Pfam" id="PF08442">
    <property type="entry name" value="ATP-grasp_2"/>
    <property type="match status" value="1"/>
</dbReference>
<dbReference type="Pfam" id="PF00549">
    <property type="entry name" value="Ligase_CoA"/>
    <property type="match status" value="1"/>
</dbReference>
<dbReference type="PIRSF" id="PIRSF001554">
    <property type="entry name" value="SucCS_beta"/>
    <property type="match status" value="1"/>
</dbReference>
<dbReference type="SUPFAM" id="SSF56059">
    <property type="entry name" value="Glutathione synthetase ATP-binding domain-like"/>
    <property type="match status" value="1"/>
</dbReference>
<dbReference type="SUPFAM" id="SSF52210">
    <property type="entry name" value="Succinyl-CoA synthetase domains"/>
    <property type="match status" value="1"/>
</dbReference>
<dbReference type="PROSITE" id="PS50975">
    <property type="entry name" value="ATP_GRASP"/>
    <property type="match status" value="1"/>
</dbReference>
<dbReference type="PROSITE" id="PS01217">
    <property type="entry name" value="SUCCINYL_COA_LIG_3"/>
    <property type="match status" value="1"/>
</dbReference>
<reference key="1">
    <citation type="submission" date="2006-10" db="EMBL/GenBank/DDBJ databases">
        <title>Complete sequence of Syntrophobacter fumaroxidans MPOB.</title>
        <authorList>
            <consortium name="US DOE Joint Genome Institute"/>
            <person name="Copeland A."/>
            <person name="Lucas S."/>
            <person name="Lapidus A."/>
            <person name="Barry K."/>
            <person name="Detter J.C."/>
            <person name="Glavina del Rio T."/>
            <person name="Hammon N."/>
            <person name="Israni S."/>
            <person name="Pitluck S."/>
            <person name="Goltsman E.G."/>
            <person name="Martinez M."/>
            <person name="Schmutz J."/>
            <person name="Larimer F."/>
            <person name="Land M."/>
            <person name="Hauser L."/>
            <person name="Kyrpides N."/>
            <person name="Kim E."/>
            <person name="Boone D.R."/>
            <person name="Brockman F."/>
            <person name="Culley D."/>
            <person name="Ferry J."/>
            <person name="Gunsalus R."/>
            <person name="McInerney M.J."/>
            <person name="Morrison M."/>
            <person name="Plugge C."/>
            <person name="Rohlin L."/>
            <person name="Scholten J."/>
            <person name="Sieber J."/>
            <person name="Stams A.J.M."/>
            <person name="Worm P."/>
            <person name="Henstra A.M."/>
            <person name="Richardson P."/>
        </authorList>
    </citation>
    <scope>NUCLEOTIDE SEQUENCE [LARGE SCALE GENOMIC DNA]</scope>
    <source>
        <strain>DSM 10017 / MPOB</strain>
    </source>
</reference>
<evidence type="ECO:0000255" key="1">
    <source>
        <dbReference type="HAMAP-Rule" id="MF_00558"/>
    </source>
</evidence>
<feature type="chain" id="PRO_1000082252" description="Succinate--CoA ligase [ADP-forming] subunit beta">
    <location>
        <begin position="1"/>
        <end position="388"/>
    </location>
</feature>
<feature type="domain" description="ATP-grasp" evidence="1">
    <location>
        <begin position="9"/>
        <end position="244"/>
    </location>
</feature>
<feature type="binding site" evidence="1">
    <location>
        <position position="46"/>
    </location>
    <ligand>
        <name>ATP</name>
        <dbReference type="ChEBI" id="CHEBI:30616"/>
    </ligand>
</feature>
<feature type="binding site" evidence="1">
    <location>
        <begin position="53"/>
        <end position="55"/>
    </location>
    <ligand>
        <name>ATP</name>
        <dbReference type="ChEBI" id="CHEBI:30616"/>
    </ligand>
</feature>
<feature type="binding site" evidence="1">
    <location>
        <position position="99"/>
    </location>
    <ligand>
        <name>ATP</name>
        <dbReference type="ChEBI" id="CHEBI:30616"/>
    </ligand>
</feature>
<feature type="binding site" evidence="1">
    <location>
        <position position="102"/>
    </location>
    <ligand>
        <name>ATP</name>
        <dbReference type="ChEBI" id="CHEBI:30616"/>
    </ligand>
</feature>
<feature type="binding site" evidence="1">
    <location>
        <position position="107"/>
    </location>
    <ligand>
        <name>ATP</name>
        <dbReference type="ChEBI" id="CHEBI:30616"/>
    </ligand>
</feature>
<feature type="binding site" evidence="1">
    <location>
        <position position="199"/>
    </location>
    <ligand>
        <name>Mg(2+)</name>
        <dbReference type="ChEBI" id="CHEBI:18420"/>
    </ligand>
</feature>
<feature type="binding site" evidence="1">
    <location>
        <position position="213"/>
    </location>
    <ligand>
        <name>Mg(2+)</name>
        <dbReference type="ChEBI" id="CHEBI:18420"/>
    </ligand>
</feature>
<feature type="binding site" evidence="1">
    <location>
        <position position="265"/>
    </location>
    <ligand>
        <name>substrate</name>
        <note>ligand shared with subunit alpha</note>
    </ligand>
</feature>
<feature type="binding site" evidence="1">
    <location>
        <begin position="322"/>
        <end position="324"/>
    </location>
    <ligand>
        <name>substrate</name>
        <note>ligand shared with subunit alpha</note>
    </ligand>
</feature>
<name>SUCC_SYNFM</name>
<organism>
    <name type="scientific">Syntrophobacter fumaroxidans (strain DSM 10017 / MPOB)</name>
    <dbReference type="NCBI Taxonomy" id="335543"/>
    <lineage>
        <taxon>Bacteria</taxon>
        <taxon>Pseudomonadati</taxon>
        <taxon>Thermodesulfobacteriota</taxon>
        <taxon>Syntrophobacteria</taxon>
        <taxon>Syntrophobacterales</taxon>
        <taxon>Syntrophobacteraceae</taxon>
        <taxon>Syntrophobacter</taxon>
    </lineage>
</organism>